<protein>
    <recommendedName>
        <fullName evidence="1">3-phosphoshikimate 1-carboxyvinyltransferase</fullName>
        <ecNumber evidence="1">2.5.1.19</ecNumber>
    </recommendedName>
    <alternativeName>
        <fullName evidence="1">5-enolpyruvylshikimate-3-phosphate synthase</fullName>
        <shortName evidence="1">EPSP synthase</shortName>
        <shortName evidence="1">EPSPS</shortName>
    </alternativeName>
</protein>
<dbReference type="EC" id="2.5.1.19" evidence="1"/>
<dbReference type="EMBL" id="CR954246">
    <property type="protein sequence ID" value="CAI86498.1"/>
    <property type="molecule type" value="Genomic_DNA"/>
</dbReference>
<dbReference type="SMR" id="Q3ILA2"/>
<dbReference type="STRING" id="326442.PSHAa1423"/>
<dbReference type="KEGG" id="pha:PSHAa1423"/>
<dbReference type="PATRIC" id="fig|326442.8.peg.1378"/>
<dbReference type="eggNOG" id="COG0128">
    <property type="taxonomic scope" value="Bacteria"/>
</dbReference>
<dbReference type="HOGENOM" id="CLU_024321_0_0_6"/>
<dbReference type="BioCyc" id="PHAL326442:PSHA_RS07005-MONOMER"/>
<dbReference type="UniPathway" id="UPA00053">
    <property type="reaction ID" value="UER00089"/>
</dbReference>
<dbReference type="Proteomes" id="UP000006843">
    <property type="component" value="Chromosome I"/>
</dbReference>
<dbReference type="GO" id="GO:0005737">
    <property type="term" value="C:cytoplasm"/>
    <property type="evidence" value="ECO:0007669"/>
    <property type="project" value="UniProtKB-SubCell"/>
</dbReference>
<dbReference type="GO" id="GO:0003866">
    <property type="term" value="F:3-phosphoshikimate 1-carboxyvinyltransferase activity"/>
    <property type="evidence" value="ECO:0007669"/>
    <property type="project" value="UniProtKB-UniRule"/>
</dbReference>
<dbReference type="GO" id="GO:0008652">
    <property type="term" value="P:amino acid biosynthetic process"/>
    <property type="evidence" value="ECO:0007669"/>
    <property type="project" value="UniProtKB-KW"/>
</dbReference>
<dbReference type="GO" id="GO:0009073">
    <property type="term" value="P:aromatic amino acid family biosynthetic process"/>
    <property type="evidence" value="ECO:0007669"/>
    <property type="project" value="UniProtKB-KW"/>
</dbReference>
<dbReference type="GO" id="GO:0009423">
    <property type="term" value="P:chorismate biosynthetic process"/>
    <property type="evidence" value="ECO:0007669"/>
    <property type="project" value="UniProtKB-UniRule"/>
</dbReference>
<dbReference type="CDD" id="cd01556">
    <property type="entry name" value="EPSP_synthase"/>
    <property type="match status" value="1"/>
</dbReference>
<dbReference type="FunFam" id="3.65.10.10:FF:000003">
    <property type="entry name" value="3-phosphoshikimate 1-carboxyvinyltransferase"/>
    <property type="match status" value="1"/>
</dbReference>
<dbReference type="FunFam" id="3.65.10.10:FF:000004">
    <property type="entry name" value="3-phosphoshikimate 1-carboxyvinyltransferase"/>
    <property type="match status" value="1"/>
</dbReference>
<dbReference type="Gene3D" id="3.65.10.10">
    <property type="entry name" value="Enolpyruvate transferase domain"/>
    <property type="match status" value="2"/>
</dbReference>
<dbReference type="HAMAP" id="MF_00210">
    <property type="entry name" value="EPSP_synth"/>
    <property type="match status" value="1"/>
</dbReference>
<dbReference type="InterPro" id="IPR001986">
    <property type="entry name" value="Enolpyruvate_Tfrase_dom"/>
</dbReference>
<dbReference type="InterPro" id="IPR036968">
    <property type="entry name" value="Enolpyruvate_Tfrase_sf"/>
</dbReference>
<dbReference type="InterPro" id="IPR006264">
    <property type="entry name" value="EPSP_synthase"/>
</dbReference>
<dbReference type="InterPro" id="IPR023193">
    <property type="entry name" value="EPSP_synthase_CS"/>
</dbReference>
<dbReference type="InterPro" id="IPR013792">
    <property type="entry name" value="RNA3'P_cycl/enolpyr_Trfase_a/b"/>
</dbReference>
<dbReference type="NCBIfam" id="TIGR01356">
    <property type="entry name" value="aroA"/>
    <property type="match status" value="1"/>
</dbReference>
<dbReference type="PANTHER" id="PTHR21090">
    <property type="entry name" value="AROM/DEHYDROQUINATE SYNTHASE"/>
    <property type="match status" value="1"/>
</dbReference>
<dbReference type="PANTHER" id="PTHR21090:SF5">
    <property type="entry name" value="PENTAFUNCTIONAL AROM POLYPEPTIDE"/>
    <property type="match status" value="1"/>
</dbReference>
<dbReference type="Pfam" id="PF00275">
    <property type="entry name" value="EPSP_synthase"/>
    <property type="match status" value="1"/>
</dbReference>
<dbReference type="PIRSF" id="PIRSF000505">
    <property type="entry name" value="EPSPS"/>
    <property type="match status" value="1"/>
</dbReference>
<dbReference type="SUPFAM" id="SSF55205">
    <property type="entry name" value="EPT/RTPC-like"/>
    <property type="match status" value="1"/>
</dbReference>
<dbReference type="PROSITE" id="PS00104">
    <property type="entry name" value="EPSP_SYNTHASE_1"/>
    <property type="match status" value="1"/>
</dbReference>
<dbReference type="PROSITE" id="PS00885">
    <property type="entry name" value="EPSP_SYNTHASE_2"/>
    <property type="match status" value="1"/>
</dbReference>
<accession>Q3ILA2</accession>
<organism>
    <name type="scientific">Pseudoalteromonas translucida (strain TAC 125)</name>
    <dbReference type="NCBI Taxonomy" id="326442"/>
    <lineage>
        <taxon>Bacteria</taxon>
        <taxon>Pseudomonadati</taxon>
        <taxon>Pseudomonadota</taxon>
        <taxon>Gammaproteobacteria</taxon>
        <taxon>Alteromonadales</taxon>
        <taxon>Pseudoalteromonadaceae</taxon>
        <taxon>Pseudoalteromonas</taxon>
    </lineage>
</organism>
<gene>
    <name evidence="1" type="primary">aroA</name>
    <name type="ordered locus">PSHAa1423</name>
</gene>
<keyword id="KW-0028">Amino-acid biosynthesis</keyword>
<keyword id="KW-0057">Aromatic amino acid biosynthesis</keyword>
<keyword id="KW-0963">Cytoplasm</keyword>
<keyword id="KW-1185">Reference proteome</keyword>
<keyword id="KW-0808">Transferase</keyword>
<evidence type="ECO:0000255" key="1">
    <source>
        <dbReference type="HAMAP-Rule" id="MF_00210"/>
    </source>
</evidence>
<proteinExistence type="inferred from homology"/>
<comment type="function">
    <text evidence="1">Catalyzes the transfer of the enolpyruvyl moiety of phosphoenolpyruvate (PEP) to the 5-hydroxyl of shikimate-3-phosphate (S3P) to produce enolpyruvyl shikimate-3-phosphate and inorganic phosphate.</text>
</comment>
<comment type="catalytic activity">
    <reaction evidence="1">
        <text>3-phosphoshikimate + phosphoenolpyruvate = 5-O-(1-carboxyvinyl)-3-phosphoshikimate + phosphate</text>
        <dbReference type="Rhea" id="RHEA:21256"/>
        <dbReference type="ChEBI" id="CHEBI:43474"/>
        <dbReference type="ChEBI" id="CHEBI:57701"/>
        <dbReference type="ChEBI" id="CHEBI:58702"/>
        <dbReference type="ChEBI" id="CHEBI:145989"/>
        <dbReference type="EC" id="2.5.1.19"/>
    </reaction>
    <physiologicalReaction direction="left-to-right" evidence="1">
        <dbReference type="Rhea" id="RHEA:21257"/>
    </physiologicalReaction>
</comment>
<comment type="pathway">
    <text evidence="1">Metabolic intermediate biosynthesis; chorismate biosynthesis; chorismate from D-erythrose 4-phosphate and phosphoenolpyruvate: step 6/7.</text>
</comment>
<comment type="subunit">
    <text evidence="1">Monomer.</text>
</comment>
<comment type="subcellular location">
    <subcellularLocation>
        <location evidence="1">Cytoplasm</location>
    </subcellularLocation>
</comment>
<comment type="similarity">
    <text evidence="1">Belongs to the EPSP synthase family.</text>
</comment>
<sequence>MEQLRLEPISRVNGSVTLPGSKSLSNRILLLAALANGTTVVENLLDSDDIRHMLGALQLLGVNVSLNQERTVATVQGVGGVFKTPREPLFLGNAGTAYRPLTAVLAAVAGEYELIGEPRMEERPIGHLVDALQALGGDITYSKNKDYPPLKIIGGQINGGEVAIDGSISSQFLTALLMAAPLFNGDTKITIKGTLVSKPYIDITLDVMARFGIEVEHSNYATFTVKGGQQYQSLERIMVEGDASSASYFVAAAAIAGGEIEIKGVGAKSVQGDIGFAKVMEQVGAKIDWYDERLVVRKGQLNGVDIDANAIPDAAMTLATVALFAKGPTAIRNIYNWRVKETDRLHAMATELRKVGAEVVEGHDFIEITPPKHFNDVAIDTYDDHRIAMCFAMVAVGGKPITINDPKCTYKTFPTFFNVLASVSE</sequence>
<name>AROA_PSET1</name>
<feature type="chain" id="PRO_0000325376" description="3-phosphoshikimate 1-carboxyvinyltransferase">
    <location>
        <begin position="1"/>
        <end position="425"/>
    </location>
</feature>
<feature type="active site" description="Proton acceptor" evidence="1">
    <location>
        <position position="313"/>
    </location>
</feature>
<feature type="binding site" evidence="1">
    <location>
        <position position="22"/>
    </location>
    <ligand>
        <name>3-phosphoshikimate</name>
        <dbReference type="ChEBI" id="CHEBI:145989"/>
    </ligand>
</feature>
<feature type="binding site" evidence="1">
    <location>
        <position position="22"/>
    </location>
    <ligand>
        <name>phosphoenolpyruvate</name>
        <dbReference type="ChEBI" id="CHEBI:58702"/>
    </ligand>
</feature>
<feature type="binding site" evidence="1">
    <location>
        <position position="23"/>
    </location>
    <ligand>
        <name>3-phosphoshikimate</name>
        <dbReference type="ChEBI" id="CHEBI:145989"/>
    </ligand>
</feature>
<feature type="binding site" evidence="1">
    <location>
        <position position="27"/>
    </location>
    <ligand>
        <name>3-phosphoshikimate</name>
        <dbReference type="ChEBI" id="CHEBI:145989"/>
    </ligand>
</feature>
<feature type="binding site" evidence="1">
    <location>
        <position position="95"/>
    </location>
    <ligand>
        <name>phosphoenolpyruvate</name>
        <dbReference type="ChEBI" id="CHEBI:58702"/>
    </ligand>
</feature>
<feature type="binding site" evidence="1">
    <location>
        <position position="123"/>
    </location>
    <ligand>
        <name>phosphoenolpyruvate</name>
        <dbReference type="ChEBI" id="CHEBI:58702"/>
    </ligand>
</feature>
<feature type="binding site" evidence="1">
    <location>
        <position position="169"/>
    </location>
    <ligand>
        <name>3-phosphoshikimate</name>
        <dbReference type="ChEBI" id="CHEBI:145989"/>
    </ligand>
</feature>
<feature type="binding site" evidence="1">
    <location>
        <position position="170"/>
    </location>
    <ligand>
        <name>3-phosphoshikimate</name>
        <dbReference type="ChEBI" id="CHEBI:145989"/>
    </ligand>
</feature>
<feature type="binding site" evidence="1">
    <location>
        <position position="171"/>
    </location>
    <ligand>
        <name>3-phosphoshikimate</name>
        <dbReference type="ChEBI" id="CHEBI:145989"/>
    </ligand>
</feature>
<feature type="binding site" evidence="1">
    <location>
        <position position="171"/>
    </location>
    <ligand>
        <name>phosphoenolpyruvate</name>
        <dbReference type="ChEBI" id="CHEBI:58702"/>
    </ligand>
</feature>
<feature type="binding site" evidence="1">
    <location>
        <position position="197"/>
    </location>
    <ligand>
        <name>3-phosphoshikimate</name>
        <dbReference type="ChEBI" id="CHEBI:145989"/>
    </ligand>
</feature>
<feature type="binding site" evidence="1">
    <location>
        <position position="313"/>
    </location>
    <ligand>
        <name>3-phosphoshikimate</name>
        <dbReference type="ChEBI" id="CHEBI:145989"/>
    </ligand>
</feature>
<feature type="binding site" evidence="1">
    <location>
        <position position="336"/>
    </location>
    <ligand>
        <name>3-phosphoshikimate</name>
        <dbReference type="ChEBI" id="CHEBI:145989"/>
    </ligand>
</feature>
<feature type="binding site" evidence="1">
    <location>
        <position position="340"/>
    </location>
    <ligand>
        <name>3-phosphoshikimate</name>
        <dbReference type="ChEBI" id="CHEBI:145989"/>
    </ligand>
</feature>
<feature type="binding site" evidence="1">
    <location>
        <position position="344"/>
    </location>
    <ligand>
        <name>phosphoenolpyruvate</name>
        <dbReference type="ChEBI" id="CHEBI:58702"/>
    </ligand>
</feature>
<feature type="binding site" evidence="1">
    <location>
        <position position="386"/>
    </location>
    <ligand>
        <name>phosphoenolpyruvate</name>
        <dbReference type="ChEBI" id="CHEBI:58702"/>
    </ligand>
</feature>
<feature type="binding site" evidence="1">
    <location>
        <position position="411"/>
    </location>
    <ligand>
        <name>phosphoenolpyruvate</name>
        <dbReference type="ChEBI" id="CHEBI:58702"/>
    </ligand>
</feature>
<reference key="1">
    <citation type="journal article" date="2005" name="Genome Res.">
        <title>Coping with cold: the genome of the versatile marine Antarctica bacterium Pseudoalteromonas haloplanktis TAC125.</title>
        <authorList>
            <person name="Medigue C."/>
            <person name="Krin E."/>
            <person name="Pascal G."/>
            <person name="Barbe V."/>
            <person name="Bernsel A."/>
            <person name="Bertin P.N."/>
            <person name="Cheung F."/>
            <person name="Cruveiller S."/>
            <person name="D'Amico S."/>
            <person name="Duilio A."/>
            <person name="Fang G."/>
            <person name="Feller G."/>
            <person name="Ho C."/>
            <person name="Mangenot S."/>
            <person name="Marino G."/>
            <person name="Nilsson J."/>
            <person name="Parrilli E."/>
            <person name="Rocha E.P.C."/>
            <person name="Rouy Z."/>
            <person name="Sekowska A."/>
            <person name="Tutino M.L."/>
            <person name="Vallenet D."/>
            <person name="von Heijne G."/>
            <person name="Danchin A."/>
        </authorList>
    </citation>
    <scope>NUCLEOTIDE SEQUENCE [LARGE SCALE GENOMIC DNA]</scope>
    <source>
        <strain>TAC 125</strain>
    </source>
</reference>